<name>FABR_YERPP</name>
<organism>
    <name type="scientific">Yersinia pestis (strain Pestoides F)</name>
    <dbReference type="NCBI Taxonomy" id="386656"/>
    <lineage>
        <taxon>Bacteria</taxon>
        <taxon>Pseudomonadati</taxon>
        <taxon>Pseudomonadota</taxon>
        <taxon>Gammaproteobacteria</taxon>
        <taxon>Enterobacterales</taxon>
        <taxon>Yersiniaceae</taxon>
        <taxon>Yersinia</taxon>
    </lineage>
</organism>
<proteinExistence type="inferred from homology"/>
<accession>A4TRG3</accession>
<keyword id="KW-0963">Cytoplasm</keyword>
<keyword id="KW-0238">DNA-binding</keyword>
<keyword id="KW-0275">Fatty acid biosynthesis</keyword>
<keyword id="KW-0276">Fatty acid metabolism</keyword>
<keyword id="KW-0444">Lipid biosynthesis</keyword>
<keyword id="KW-0443">Lipid metabolism</keyword>
<keyword id="KW-0678">Repressor</keyword>
<keyword id="KW-0804">Transcription</keyword>
<keyword id="KW-0805">Transcription regulation</keyword>
<comment type="function">
    <text evidence="1">Represses the transcription of fabB, involved in unsaturated fatty acid (UFA) biosynthesis. By controlling UFA production, FabR directly influences the physical properties of the membrane bilayer.</text>
</comment>
<comment type="subunit">
    <text evidence="1">Homodimer.</text>
</comment>
<comment type="subcellular location">
    <subcellularLocation>
        <location evidence="1">Cytoplasm</location>
    </subcellularLocation>
</comment>
<feature type="chain" id="PRO_1000065873" description="HTH-type transcriptional repressor FabR">
    <location>
        <begin position="1"/>
        <end position="211"/>
    </location>
</feature>
<feature type="domain" description="HTH tetR-type" evidence="1">
    <location>
        <begin position="10"/>
        <end position="70"/>
    </location>
</feature>
<feature type="DNA-binding region" description="H-T-H motif" evidence="1">
    <location>
        <begin position="33"/>
        <end position="52"/>
    </location>
</feature>
<sequence>MGVRAQQKERTRRSLIEAAFSQLSAERSFASLSLREVSREAGIAPTSFYRHFRDVDELGLTMVDESGLMLRQLMRQARQRIAKGGSVIRTSVSTFMEFIGNNPNAFRLLLRERSGTSAAFRAAVAREIQHFIAELADYLELENHMPRSFTEAQAEAMVTIVFSAGAEVLDVDIEQRRQLEERLVLQLRMISKGAYYWYRREQEKLAASRVE</sequence>
<dbReference type="EMBL" id="CP000668">
    <property type="protein sequence ID" value="ABP41875.1"/>
    <property type="molecule type" value="Genomic_DNA"/>
</dbReference>
<dbReference type="RefSeq" id="WP_002209476.1">
    <property type="nucleotide sequence ID" value="NZ_CP009715.1"/>
</dbReference>
<dbReference type="SMR" id="A4TRG3"/>
<dbReference type="GeneID" id="96663601"/>
<dbReference type="KEGG" id="ypp:YPDSF_3525"/>
<dbReference type="PATRIC" id="fig|386656.14.peg.180"/>
<dbReference type="GO" id="GO:0005737">
    <property type="term" value="C:cytoplasm"/>
    <property type="evidence" value="ECO:0007669"/>
    <property type="project" value="UniProtKB-SubCell"/>
</dbReference>
<dbReference type="GO" id="GO:0003677">
    <property type="term" value="F:DNA binding"/>
    <property type="evidence" value="ECO:0007669"/>
    <property type="project" value="UniProtKB-KW"/>
</dbReference>
<dbReference type="GO" id="GO:0003700">
    <property type="term" value="F:DNA-binding transcription factor activity"/>
    <property type="evidence" value="ECO:0007669"/>
    <property type="project" value="UniProtKB-UniRule"/>
</dbReference>
<dbReference type="GO" id="GO:0006633">
    <property type="term" value="P:fatty acid biosynthetic process"/>
    <property type="evidence" value="ECO:0007669"/>
    <property type="project" value="UniProtKB-UniRule"/>
</dbReference>
<dbReference type="GO" id="GO:0045717">
    <property type="term" value="P:negative regulation of fatty acid biosynthetic process"/>
    <property type="evidence" value="ECO:0007669"/>
    <property type="project" value="UniProtKB-UniRule"/>
</dbReference>
<dbReference type="FunFam" id="1.10.10.60:FF:000034">
    <property type="entry name" value="HTH-type transcriptional repressor FabR"/>
    <property type="match status" value="1"/>
</dbReference>
<dbReference type="FunFam" id="1.10.357.10:FF:000001">
    <property type="entry name" value="HTH-type transcriptional repressor FabR"/>
    <property type="match status" value="1"/>
</dbReference>
<dbReference type="Gene3D" id="1.10.10.60">
    <property type="entry name" value="Homeodomain-like"/>
    <property type="match status" value="1"/>
</dbReference>
<dbReference type="Gene3D" id="1.10.357.10">
    <property type="entry name" value="Tetracycline Repressor, domain 2"/>
    <property type="match status" value="1"/>
</dbReference>
<dbReference type="HAMAP" id="MF_01190">
    <property type="entry name" value="HTH_type_FabR"/>
    <property type="match status" value="1"/>
</dbReference>
<dbReference type="InterPro" id="IPR054129">
    <property type="entry name" value="DesT_TetR_C"/>
</dbReference>
<dbReference type="InterPro" id="IPR009057">
    <property type="entry name" value="Homeodomain-like_sf"/>
</dbReference>
<dbReference type="InterPro" id="IPR001647">
    <property type="entry name" value="HTH_TetR"/>
</dbReference>
<dbReference type="InterPro" id="IPR050692">
    <property type="entry name" value="HTH_transcr_repressor_FabR"/>
</dbReference>
<dbReference type="InterPro" id="IPR023764">
    <property type="entry name" value="Tscrpt_reg_HTH_FabR"/>
</dbReference>
<dbReference type="NCBIfam" id="NF008402">
    <property type="entry name" value="PRK11202.1"/>
    <property type="match status" value="1"/>
</dbReference>
<dbReference type="PANTHER" id="PTHR47752">
    <property type="entry name" value="HTH-TYPE TRANSCRIPTIONAL REPRESSOR FABR"/>
    <property type="match status" value="1"/>
</dbReference>
<dbReference type="PANTHER" id="PTHR47752:SF1">
    <property type="entry name" value="HTH-TYPE TRANSCRIPTIONAL REPRESSOR FABR"/>
    <property type="match status" value="1"/>
</dbReference>
<dbReference type="Pfam" id="PF21943">
    <property type="entry name" value="TetR_C_46"/>
    <property type="match status" value="1"/>
</dbReference>
<dbReference type="Pfam" id="PF00440">
    <property type="entry name" value="TetR_N"/>
    <property type="match status" value="1"/>
</dbReference>
<dbReference type="SUPFAM" id="SSF46689">
    <property type="entry name" value="Homeodomain-like"/>
    <property type="match status" value="1"/>
</dbReference>
<dbReference type="PROSITE" id="PS50977">
    <property type="entry name" value="HTH_TETR_2"/>
    <property type="match status" value="1"/>
</dbReference>
<protein>
    <recommendedName>
        <fullName evidence="1">HTH-type transcriptional repressor FabR</fullName>
    </recommendedName>
</protein>
<reference key="1">
    <citation type="submission" date="2007-02" db="EMBL/GenBank/DDBJ databases">
        <title>Complete sequence of chromosome of Yersinia pestis Pestoides F.</title>
        <authorList>
            <consortium name="US DOE Joint Genome Institute"/>
            <person name="Copeland A."/>
            <person name="Lucas S."/>
            <person name="Lapidus A."/>
            <person name="Barry K."/>
            <person name="Detter J.C."/>
            <person name="Glavina del Rio T."/>
            <person name="Hammon N."/>
            <person name="Israni S."/>
            <person name="Dalin E."/>
            <person name="Tice H."/>
            <person name="Pitluck S."/>
            <person name="Di Bartolo G."/>
            <person name="Chain P."/>
            <person name="Malfatti S."/>
            <person name="Shin M."/>
            <person name="Vergez L."/>
            <person name="Schmutz J."/>
            <person name="Larimer F."/>
            <person name="Land M."/>
            <person name="Hauser L."/>
            <person name="Worsham P."/>
            <person name="Chu M."/>
            <person name="Bearden S."/>
            <person name="Garcia E."/>
            <person name="Richardson P."/>
        </authorList>
    </citation>
    <scope>NUCLEOTIDE SEQUENCE [LARGE SCALE GENOMIC DNA]</scope>
    <source>
        <strain>Pestoides F</strain>
    </source>
</reference>
<gene>
    <name evidence="1" type="primary">fabR</name>
    <name type="ordered locus">YPDSF_3525</name>
</gene>
<evidence type="ECO:0000255" key="1">
    <source>
        <dbReference type="HAMAP-Rule" id="MF_01190"/>
    </source>
</evidence>